<organism>
    <name type="scientific">Clostridium botulinum (strain Loch Maree / Type A3)</name>
    <dbReference type="NCBI Taxonomy" id="498214"/>
    <lineage>
        <taxon>Bacteria</taxon>
        <taxon>Bacillati</taxon>
        <taxon>Bacillota</taxon>
        <taxon>Clostridia</taxon>
        <taxon>Eubacteriales</taxon>
        <taxon>Clostridiaceae</taxon>
        <taxon>Clostridium</taxon>
    </lineage>
</organism>
<gene>
    <name evidence="1" type="primary">rpsG</name>
    <name type="ordered locus">CLK_2928</name>
</gene>
<proteinExistence type="inferred from homology"/>
<sequence>MPRKGHIAKRDVLPDPLYNSKVVTKLINSIMLDGKRGVAQKICYDAFEIIAEKSGKDAMEVFETAMNNIMPLLEVKARRIGGATYQVPIEVRPERRQTLGIRWMLIAARKRGERSMRERLAGELLDASNNTGAAVKKREDTHKMAEANKAFAHYRY</sequence>
<reference key="1">
    <citation type="journal article" date="2007" name="PLoS ONE">
        <title>Analysis of the neurotoxin complex genes in Clostridium botulinum A1-A4 and B1 strains: BoNT/A3, /Ba4 and /B1 clusters are located within plasmids.</title>
        <authorList>
            <person name="Smith T.J."/>
            <person name="Hill K.K."/>
            <person name="Foley B.T."/>
            <person name="Detter J.C."/>
            <person name="Munk A.C."/>
            <person name="Bruce D.C."/>
            <person name="Doggett N.A."/>
            <person name="Smith L.A."/>
            <person name="Marks J.D."/>
            <person name="Xie G."/>
            <person name="Brettin T.S."/>
        </authorList>
    </citation>
    <scope>NUCLEOTIDE SEQUENCE [LARGE SCALE GENOMIC DNA]</scope>
    <source>
        <strain>Loch Maree / Type A3</strain>
    </source>
</reference>
<evidence type="ECO:0000255" key="1">
    <source>
        <dbReference type="HAMAP-Rule" id="MF_00480"/>
    </source>
</evidence>
<evidence type="ECO:0000305" key="2"/>
<dbReference type="EMBL" id="CP000962">
    <property type="protein sequence ID" value="ACA56856.1"/>
    <property type="molecule type" value="Genomic_DNA"/>
</dbReference>
<dbReference type="RefSeq" id="WP_003357613.1">
    <property type="nucleotide sequence ID" value="NC_010520.1"/>
</dbReference>
<dbReference type="SMR" id="B1KSM9"/>
<dbReference type="GeneID" id="92940254"/>
<dbReference type="KEGG" id="cbl:CLK_2928"/>
<dbReference type="HOGENOM" id="CLU_072226_1_1_9"/>
<dbReference type="GO" id="GO:0015935">
    <property type="term" value="C:small ribosomal subunit"/>
    <property type="evidence" value="ECO:0007669"/>
    <property type="project" value="InterPro"/>
</dbReference>
<dbReference type="GO" id="GO:0019843">
    <property type="term" value="F:rRNA binding"/>
    <property type="evidence" value="ECO:0007669"/>
    <property type="project" value="UniProtKB-UniRule"/>
</dbReference>
<dbReference type="GO" id="GO:0003735">
    <property type="term" value="F:structural constituent of ribosome"/>
    <property type="evidence" value="ECO:0007669"/>
    <property type="project" value="InterPro"/>
</dbReference>
<dbReference type="GO" id="GO:0000049">
    <property type="term" value="F:tRNA binding"/>
    <property type="evidence" value="ECO:0007669"/>
    <property type="project" value="UniProtKB-UniRule"/>
</dbReference>
<dbReference type="GO" id="GO:0006412">
    <property type="term" value="P:translation"/>
    <property type="evidence" value="ECO:0007669"/>
    <property type="project" value="UniProtKB-UniRule"/>
</dbReference>
<dbReference type="CDD" id="cd14869">
    <property type="entry name" value="uS7_Bacteria"/>
    <property type="match status" value="1"/>
</dbReference>
<dbReference type="FunFam" id="1.10.455.10:FF:000001">
    <property type="entry name" value="30S ribosomal protein S7"/>
    <property type="match status" value="1"/>
</dbReference>
<dbReference type="Gene3D" id="1.10.455.10">
    <property type="entry name" value="Ribosomal protein S7 domain"/>
    <property type="match status" value="1"/>
</dbReference>
<dbReference type="HAMAP" id="MF_00480_B">
    <property type="entry name" value="Ribosomal_uS7_B"/>
    <property type="match status" value="1"/>
</dbReference>
<dbReference type="InterPro" id="IPR000235">
    <property type="entry name" value="Ribosomal_uS7"/>
</dbReference>
<dbReference type="InterPro" id="IPR005717">
    <property type="entry name" value="Ribosomal_uS7_bac/org-type"/>
</dbReference>
<dbReference type="InterPro" id="IPR020606">
    <property type="entry name" value="Ribosomal_uS7_CS"/>
</dbReference>
<dbReference type="InterPro" id="IPR023798">
    <property type="entry name" value="Ribosomal_uS7_dom"/>
</dbReference>
<dbReference type="InterPro" id="IPR036823">
    <property type="entry name" value="Ribosomal_uS7_dom_sf"/>
</dbReference>
<dbReference type="NCBIfam" id="TIGR01029">
    <property type="entry name" value="rpsG_bact"/>
    <property type="match status" value="1"/>
</dbReference>
<dbReference type="PANTHER" id="PTHR11205">
    <property type="entry name" value="RIBOSOMAL PROTEIN S7"/>
    <property type="match status" value="1"/>
</dbReference>
<dbReference type="Pfam" id="PF00177">
    <property type="entry name" value="Ribosomal_S7"/>
    <property type="match status" value="1"/>
</dbReference>
<dbReference type="PIRSF" id="PIRSF002122">
    <property type="entry name" value="RPS7p_RPS7a_RPS5e_RPS7o"/>
    <property type="match status" value="1"/>
</dbReference>
<dbReference type="SUPFAM" id="SSF47973">
    <property type="entry name" value="Ribosomal protein S7"/>
    <property type="match status" value="1"/>
</dbReference>
<dbReference type="PROSITE" id="PS00052">
    <property type="entry name" value="RIBOSOMAL_S7"/>
    <property type="match status" value="1"/>
</dbReference>
<protein>
    <recommendedName>
        <fullName evidence="1">Small ribosomal subunit protein uS7</fullName>
    </recommendedName>
    <alternativeName>
        <fullName evidence="2">30S ribosomal protein S7</fullName>
    </alternativeName>
</protein>
<accession>B1KSM9</accession>
<name>RS7_CLOBM</name>
<keyword id="KW-0687">Ribonucleoprotein</keyword>
<keyword id="KW-0689">Ribosomal protein</keyword>
<keyword id="KW-0694">RNA-binding</keyword>
<keyword id="KW-0699">rRNA-binding</keyword>
<keyword id="KW-0820">tRNA-binding</keyword>
<feature type="chain" id="PRO_1000125921" description="Small ribosomal subunit protein uS7">
    <location>
        <begin position="1"/>
        <end position="156"/>
    </location>
</feature>
<comment type="function">
    <text evidence="1">One of the primary rRNA binding proteins, it binds directly to 16S rRNA where it nucleates assembly of the head domain of the 30S subunit. Is located at the subunit interface close to the decoding center, probably blocks exit of the E-site tRNA.</text>
</comment>
<comment type="subunit">
    <text evidence="1">Part of the 30S ribosomal subunit. Contacts proteins S9 and S11.</text>
</comment>
<comment type="similarity">
    <text evidence="1">Belongs to the universal ribosomal protein uS7 family.</text>
</comment>